<reference key="1">
    <citation type="journal article" date="2002" name="Nature">
        <title>Complete genome sequence of the model actinomycete Streptomyces coelicolor A3(2).</title>
        <authorList>
            <person name="Bentley S.D."/>
            <person name="Chater K.F."/>
            <person name="Cerdeno-Tarraga A.-M."/>
            <person name="Challis G.L."/>
            <person name="Thomson N.R."/>
            <person name="James K.D."/>
            <person name="Harris D.E."/>
            <person name="Quail M.A."/>
            <person name="Kieser H."/>
            <person name="Harper D."/>
            <person name="Bateman A."/>
            <person name="Brown S."/>
            <person name="Chandra G."/>
            <person name="Chen C.W."/>
            <person name="Collins M."/>
            <person name="Cronin A."/>
            <person name="Fraser A."/>
            <person name="Goble A."/>
            <person name="Hidalgo J."/>
            <person name="Hornsby T."/>
            <person name="Howarth S."/>
            <person name="Huang C.-H."/>
            <person name="Kieser T."/>
            <person name="Larke L."/>
            <person name="Murphy L.D."/>
            <person name="Oliver K."/>
            <person name="O'Neil S."/>
            <person name="Rabbinowitsch E."/>
            <person name="Rajandream M.A."/>
            <person name="Rutherford K.M."/>
            <person name="Rutter S."/>
            <person name="Seeger K."/>
            <person name="Saunders D."/>
            <person name="Sharp S."/>
            <person name="Squares R."/>
            <person name="Squares S."/>
            <person name="Taylor K."/>
            <person name="Warren T."/>
            <person name="Wietzorrek A."/>
            <person name="Woodward J.R."/>
            <person name="Barrell B.G."/>
            <person name="Parkhill J."/>
            <person name="Hopwood D.A."/>
        </authorList>
    </citation>
    <scope>NUCLEOTIDE SEQUENCE [LARGE SCALE GENOMIC DNA]</scope>
    <source>
        <strain>ATCC BAA-471 / A3(2) / M145</strain>
    </source>
</reference>
<sequence>MTATSELDDSFHVFDTTLRDGAQREGINLTVADKLAIARHLDDFGVGFIEGGWPGANPRDTEFFARARQEIDFKHAQLVAFGSTRRAGANAAEDHQVKALLDSGAQVITLVAKSHDRHVELALRTTLDENLAMVADTVSHLKAQGRRVFVDCEHFFDGYRANPEYAKSVVRTASEAGADVVVLCDTNGGMLPAQIQAVVATVLADTGARLGIHAQDDTGCAVANTLAAVDAGATHVQCTANGYGERVGNANLFPVVAALELKYGKQVLPEGRLREMTRISHAIAEVVNLTPSTHQPYVGVSAFAHKAGLHASAIKVDPDLYQHIDPELVGNTMRMLVSDMAGRASIELKGKELGIDLGGDRELVGRVVERVKERELAGYTYEAADASFELLLRAEAEGRPLKYFEVESWRAITEDRPDGSHANEATVKLWAKGERIVATAEGNGPVNALDRSLRVALEKIYPELAKLDLVDYKVRILEGVHGTQSTTRVLISTSDGTGEWATVGVAENVIAASWQALEDAYTYGLLRAGVAPAE</sequence>
<comment type="function">
    <text evidence="1">Catalyzes the condensation of pyruvate and acetyl-coenzyme A to form (R)-citramalate.</text>
</comment>
<comment type="catalytic activity">
    <reaction evidence="1">
        <text>pyruvate + acetyl-CoA + H2O = (3R)-citramalate + CoA + H(+)</text>
        <dbReference type="Rhea" id="RHEA:19045"/>
        <dbReference type="ChEBI" id="CHEBI:15361"/>
        <dbReference type="ChEBI" id="CHEBI:15377"/>
        <dbReference type="ChEBI" id="CHEBI:15378"/>
        <dbReference type="ChEBI" id="CHEBI:30934"/>
        <dbReference type="ChEBI" id="CHEBI:57287"/>
        <dbReference type="ChEBI" id="CHEBI:57288"/>
        <dbReference type="EC" id="2.3.3.21"/>
    </reaction>
</comment>
<comment type="pathway">
    <text evidence="1">Amino-acid biosynthesis; L-isoleucine biosynthesis; 2-oxobutanoate from pyruvate: step 1/3.</text>
</comment>
<comment type="similarity">
    <text evidence="3">Belongs to the alpha-IPM synthase/homocitrate synthase family.</text>
</comment>
<protein>
    <recommendedName>
        <fullName evidence="3">(R)-citramalate synthase</fullName>
        <ecNumber evidence="1">2.3.3.21</ecNumber>
    </recommendedName>
</protein>
<dbReference type="EC" id="2.3.3.21" evidence="1"/>
<dbReference type="EMBL" id="AL939124">
    <property type="protein sequence ID" value="CAA19977.1"/>
    <property type="molecule type" value="Genomic_DNA"/>
</dbReference>
<dbReference type="PIR" id="T29059">
    <property type="entry name" value="T29059"/>
</dbReference>
<dbReference type="RefSeq" id="NP_629663.1">
    <property type="nucleotide sequence ID" value="NC_003888.3"/>
</dbReference>
<dbReference type="RefSeq" id="WP_011030295.1">
    <property type="nucleotide sequence ID" value="NZ_VNID01000011.1"/>
</dbReference>
<dbReference type="SMR" id="O86511"/>
<dbReference type="STRING" id="100226.gene:17763181"/>
<dbReference type="PaxDb" id="100226-SCO5529"/>
<dbReference type="GeneID" id="91383504"/>
<dbReference type="KEGG" id="sco:SCO5529"/>
<dbReference type="PATRIC" id="fig|100226.15.peg.5616"/>
<dbReference type="eggNOG" id="COG0119">
    <property type="taxonomic scope" value="Bacteria"/>
</dbReference>
<dbReference type="HOGENOM" id="CLU_022158_7_0_11"/>
<dbReference type="InParanoid" id="O86511"/>
<dbReference type="OrthoDB" id="9803573at2"/>
<dbReference type="PhylomeDB" id="O86511"/>
<dbReference type="UniPathway" id="UPA00047">
    <property type="reaction ID" value="UER00066"/>
</dbReference>
<dbReference type="Proteomes" id="UP000001973">
    <property type="component" value="Chromosome"/>
</dbReference>
<dbReference type="GO" id="GO:0043714">
    <property type="term" value="F:(R)-citramalate synthase activity"/>
    <property type="evidence" value="ECO:0007669"/>
    <property type="project" value="RHEA"/>
</dbReference>
<dbReference type="GO" id="GO:0003852">
    <property type="term" value="F:2-isopropylmalate synthase activity"/>
    <property type="evidence" value="ECO:0007669"/>
    <property type="project" value="InterPro"/>
</dbReference>
<dbReference type="GO" id="GO:0009097">
    <property type="term" value="P:isoleucine biosynthetic process"/>
    <property type="evidence" value="ECO:0007669"/>
    <property type="project" value="UniProtKB-UniPathway"/>
</dbReference>
<dbReference type="GO" id="GO:0009098">
    <property type="term" value="P:L-leucine biosynthetic process"/>
    <property type="evidence" value="ECO:0007669"/>
    <property type="project" value="InterPro"/>
</dbReference>
<dbReference type="CDD" id="cd07941">
    <property type="entry name" value="DRE_TIM_LeuA3"/>
    <property type="match status" value="1"/>
</dbReference>
<dbReference type="Gene3D" id="1.10.238.260">
    <property type="match status" value="1"/>
</dbReference>
<dbReference type="Gene3D" id="3.30.160.270">
    <property type="match status" value="1"/>
</dbReference>
<dbReference type="Gene3D" id="3.20.20.70">
    <property type="entry name" value="Aldolase class I"/>
    <property type="match status" value="1"/>
</dbReference>
<dbReference type="InterPro" id="IPR013709">
    <property type="entry name" value="2-isopropylmalate_synth_dimer"/>
</dbReference>
<dbReference type="InterPro" id="IPR002034">
    <property type="entry name" value="AIPM/Hcit_synth_CS"/>
</dbReference>
<dbReference type="InterPro" id="IPR013785">
    <property type="entry name" value="Aldolase_TIM"/>
</dbReference>
<dbReference type="InterPro" id="IPR005675">
    <property type="entry name" value="Citramal_synthase"/>
</dbReference>
<dbReference type="InterPro" id="IPR054691">
    <property type="entry name" value="LeuA/HCS_post-cat"/>
</dbReference>
<dbReference type="InterPro" id="IPR036230">
    <property type="entry name" value="LeuA_allosteric_dom_sf"/>
</dbReference>
<dbReference type="InterPro" id="IPR000891">
    <property type="entry name" value="PYR_CT"/>
</dbReference>
<dbReference type="NCBIfam" id="TIGR00977">
    <property type="entry name" value="citramal_synth"/>
    <property type="match status" value="1"/>
</dbReference>
<dbReference type="PANTHER" id="PTHR43538:SF1">
    <property type="entry name" value="(R)-CITRAMALATE SYNTHASE"/>
    <property type="match status" value="1"/>
</dbReference>
<dbReference type="PANTHER" id="PTHR43538">
    <property type="entry name" value="ALPHA-IPM SYNTHASE/HOMOCITRATE SYNTHASE"/>
    <property type="match status" value="1"/>
</dbReference>
<dbReference type="Pfam" id="PF22617">
    <property type="entry name" value="HCS_D2"/>
    <property type="match status" value="1"/>
</dbReference>
<dbReference type="Pfam" id="PF00682">
    <property type="entry name" value="HMGL-like"/>
    <property type="match status" value="1"/>
</dbReference>
<dbReference type="Pfam" id="PF08502">
    <property type="entry name" value="LeuA_dimer"/>
    <property type="match status" value="1"/>
</dbReference>
<dbReference type="SMART" id="SM00917">
    <property type="entry name" value="LeuA_dimer"/>
    <property type="match status" value="1"/>
</dbReference>
<dbReference type="SUPFAM" id="SSF110921">
    <property type="entry name" value="2-isopropylmalate synthase LeuA, allosteric (dimerisation) domain"/>
    <property type="match status" value="1"/>
</dbReference>
<dbReference type="SUPFAM" id="SSF51569">
    <property type="entry name" value="Aldolase"/>
    <property type="match status" value="1"/>
</dbReference>
<dbReference type="PROSITE" id="PS00815">
    <property type="entry name" value="AIPM_HOMOCIT_SYNTH_1"/>
    <property type="match status" value="1"/>
</dbReference>
<dbReference type="PROSITE" id="PS50991">
    <property type="entry name" value="PYR_CT"/>
    <property type="match status" value="1"/>
</dbReference>
<name>CIMA_STRCO</name>
<accession>O86511</accession>
<gene>
    <name evidence="3" type="primary">cimA</name>
    <name type="ordered locus">SCO5529</name>
    <name type="ORF">SC1C2.10</name>
</gene>
<organism>
    <name type="scientific">Streptomyces coelicolor (strain ATCC BAA-471 / A3(2) / M145)</name>
    <dbReference type="NCBI Taxonomy" id="100226"/>
    <lineage>
        <taxon>Bacteria</taxon>
        <taxon>Bacillati</taxon>
        <taxon>Actinomycetota</taxon>
        <taxon>Actinomycetes</taxon>
        <taxon>Kitasatosporales</taxon>
        <taxon>Streptomycetaceae</taxon>
        <taxon>Streptomyces</taxon>
        <taxon>Streptomyces albidoflavus group</taxon>
    </lineage>
</organism>
<feature type="chain" id="PRO_0000140470" description="(R)-citramalate synthase">
    <location>
        <begin position="1"/>
        <end position="534"/>
    </location>
</feature>
<feature type="domain" description="Pyruvate carboxyltransferase" evidence="2">
    <location>
        <begin position="11"/>
        <end position="274"/>
    </location>
</feature>
<keyword id="KW-0028">Amino-acid biosynthesis</keyword>
<keyword id="KW-0100">Branched-chain amino acid biosynthesis</keyword>
<keyword id="KW-0412">Isoleucine biosynthesis</keyword>
<keyword id="KW-1185">Reference proteome</keyword>
<keyword id="KW-0808">Transferase</keyword>
<proteinExistence type="inferred from homology"/>
<evidence type="ECO:0000250" key="1">
    <source>
        <dbReference type="UniProtKB" id="Q74C76"/>
    </source>
</evidence>
<evidence type="ECO:0000255" key="2">
    <source>
        <dbReference type="PROSITE-ProRule" id="PRU01151"/>
    </source>
</evidence>
<evidence type="ECO:0000305" key="3"/>